<gene>
    <name evidence="1" type="primary">folE2</name>
    <name type="ordered locus">Pden_4297</name>
</gene>
<name>GCH4_PARDP</name>
<feature type="chain" id="PRO_0000289503" description="GTP cyclohydrolase FolE2">
    <location>
        <begin position="1"/>
        <end position="321"/>
    </location>
</feature>
<feature type="site" description="May be catalytically important" evidence="1">
    <location>
        <position position="183"/>
    </location>
</feature>
<proteinExistence type="inferred from homology"/>
<evidence type="ECO:0000255" key="1">
    <source>
        <dbReference type="HAMAP-Rule" id="MF_01527"/>
    </source>
</evidence>
<sequence length="321" mass="35803">MTEARPVATERAYPALSREYPADFRVDDSYKASLPDLQNGPASLIVGARAPIQHVGISNFRLPIRYQTQEGGEIALETSVTGTVSLEADRKGINMSRIMRSFYAHAEKQFSMGVLEAALEDYKSDLGSFDARIMMRLSYPMRVESLRSGLSGWQYYDIALELSERAGQRLRIMHFDYVYSSTCPCSLELAEHARQMRGQLATPHSQRSIARISVVMQGDTLWFEDMVTLCRRAVATETQVMVKREDEQAFAELNAANPIFVEDAVRAFAAELMAEPRIGDFRVVASHQESLHSHDAVSVLTQGETFAHASLDPAIFAGLRA</sequence>
<organism>
    <name type="scientific">Paracoccus denitrificans (strain Pd 1222)</name>
    <dbReference type="NCBI Taxonomy" id="318586"/>
    <lineage>
        <taxon>Bacteria</taxon>
        <taxon>Pseudomonadati</taxon>
        <taxon>Pseudomonadota</taxon>
        <taxon>Alphaproteobacteria</taxon>
        <taxon>Rhodobacterales</taxon>
        <taxon>Paracoccaceae</taxon>
        <taxon>Paracoccus</taxon>
    </lineage>
</organism>
<dbReference type="EC" id="3.5.4.16" evidence="1"/>
<dbReference type="EMBL" id="CP000490">
    <property type="protein sequence ID" value="ABL72361.1"/>
    <property type="molecule type" value="Genomic_DNA"/>
</dbReference>
<dbReference type="SMR" id="A1BA17"/>
<dbReference type="STRING" id="318586.Pden_4297"/>
<dbReference type="EnsemblBacteria" id="ABL72361">
    <property type="protein sequence ID" value="ABL72361"/>
    <property type="gene ID" value="Pden_4297"/>
</dbReference>
<dbReference type="KEGG" id="pde:Pden_4297"/>
<dbReference type="eggNOG" id="COG1469">
    <property type="taxonomic scope" value="Bacteria"/>
</dbReference>
<dbReference type="HOGENOM" id="CLU_062816_0_1_5"/>
<dbReference type="OrthoDB" id="239637at2"/>
<dbReference type="UniPathway" id="UPA00848">
    <property type="reaction ID" value="UER00151"/>
</dbReference>
<dbReference type="Proteomes" id="UP000000361">
    <property type="component" value="Chromosome 2"/>
</dbReference>
<dbReference type="GO" id="GO:0003934">
    <property type="term" value="F:GTP cyclohydrolase I activity"/>
    <property type="evidence" value="ECO:0007669"/>
    <property type="project" value="UniProtKB-UniRule"/>
</dbReference>
<dbReference type="GO" id="GO:0046654">
    <property type="term" value="P:tetrahydrofolate biosynthetic process"/>
    <property type="evidence" value="ECO:0007669"/>
    <property type="project" value="UniProtKB-UniRule"/>
</dbReference>
<dbReference type="Gene3D" id="3.10.270.10">
    <property type="entry name" value="Urate Oxidase"/>
    <property type="match status" value="1"/>
</dbReference>
<dbReference type="HAMAP" id="MF_01527_B">
    <property type="entry name" value="GTP_cyclohydrol_B"/>
    <property type="match status" value="1"/>
</dbReference>
<dbReference type="InterPro" id="IPR022838">
    <property type="entry name" value="GTP_cyclohydrolase_FolE2"/>
</dbReference>
<dbReference type="InterPro" id="IPR003801">
    <property type="entry name" value="GTP_cyclohydrolase_FolE2/MptA"/>
</dbReference>
<dbReference type="NCBIfam" id="NF010200">
    <property type="entry name" value="PRK13674.1-1"/>
    <property type="match status" value="1"/>
</dbReference>
<dbReference type="PANTHER" id="PTHR36445">
    <property type="entry name" value="GTP CYCLOHYDROLASE MPTA"/>
    <property type="match status" value="1"/>
</dbReference>
<dbReference type="PANTHER" id="PTHR36445:SF1">
    <property type="entry name" value="GTP CYCLOHYDROLASE MPTA"/>
    <property type="match status" value="1"/>
</dbReference>
<dbReference type="Pfam" id="PF02649">
    <property type="entry name" value="GCHY-1"/>
    <property type="match status" value="1"/>
</dbReference>
<comment type="function">
    <text evidence="1">Converts GTP to 7,8-dihydroneopterin triphosphate.</text>
</comment>
<comment type="catalytic activity">
    <reaction evidence="1">
        <text>GTP + H2O = 7,8-dihydroneopterin 3'-triphosphate + formate + H(+)</text>
        <dbReference type="Rhea" id="RHEA:17473"/>
        <dbReference type="ChEBI" id="CHEBI:15377"/>
        <dbReference type="ChEBI" id="CHEBI:15378"/>
        <dbReference type="ChEBI" id="CHEBI:15740"/>
        <dbReference type="ChEBI" id="CHEBI:37565"/>
        <dbReference type="ChEBI" id="CHEBI:58462"/>
        <dbReference type="EC" id="3.5.4.16"/>
    </reaction>
</comment>
<comment type="pathway">
    <text evidence="1">Cofactor biosynthesis; 7,8-dihydroneopterin triphosphate biosynthesis; 7,8-dihydroneopterin triphosphate from GTP: step 1/1.</text>
</comment>
<comment type="similarity">
    <text evidence="1">Belongs to the GTP cyclohydrolase IV family.</text>
</comment>
<reference key="1">
    <citation type="submission" date="2006-12" db="EMBL/GenBank/DDBJ databases">
        <title>Complete sequence of chromosome 2 of Paracoccus denitrificans PD1222.</title>
        <authorList>
            <person name="Copeland A."/>
            <person name="Lucas S."/>
            <person name="Lapidus A."/>
            <person name="Barry K."/>
            <person name="Detter J.C."/>
            <person name="Glavina del Rio T."/>
            <person name="Hammon N."/>
            <person name="Israni S."/>
            <person name="Dalin E."/>
            <person name="Tice H."/>
            <person name="Pitluck S."/>
            <person name="Munk A.C."/>
            <person name="Brettin T."/>
            <person name="Bruce D."/>
            <person name="Han C."/>
            <person name="Tapia R."/>
            <person name="Gilna P."/>
            <person name="Schmutz J."/>
            <person name="Larimer F."/>
            <person name="Land M."/>
            <person name="Hauser L."/>
            <person name="Kyrpides N."/>
            <person name="Lykidis A."/>
            <person name="Spiro S."/>
            <person name="Richardson D.J."/>
            <person name="Moir J.W.B."/>
            <person name="Ferguson S.J."/>
            <person name="van Spanning R.J.M."/>
            <person name="Richardson P."/>
        </authorList>
    </citation>
    <scope>NUCLEOTIDE SEQUENCE [LARGE SCALE GENOMIC DNA]</scope>
    <source>
        <strain>Pd 1222</strain>
    </source>
</reference>
<protein>
    <recommendedName>
        <fullName evidence="1">GTP cyclohydrolase FolE2</fullName>
        <ecNumber evidence="1">3.5.4.16</ecNumber>
    </recommendedName>
</protein>
<accession>A1BA17</accession>
<keyword id="KW-0378">Hydrolase</keyword>
<keyword id="KW-1185">Reference proteome</keyword>